<gene>
    <name evidence="1" type="primary">lnt</name>
    <name type="ordered locus">WIGBR4460</name>
</gene>
<protein>
    <recommendedName>
        <fullName evidence="1">Apolipoprotein N-acyltransferase</fullName>
        <shortName evidence="1">ALP N-acyltransferase</shortName>
        <ecNumber evidence="1">2.3.1.269</ecNumber>
    </recommendedName>
</protein>
<evidence type="ECO:0000255" key="1">
    <source>
        <dbReference type="HAMAP-Rule" id="MF_01148"/>
    </source>
</evidence>
<reference key="1">
    <citation type="journal article" date="2002" name="Nat. Genet.">
        <title>Genome sequence of the endocellular obligate symbiont of tsetse flies, Wigglesworthia glossinidia.</title>
        <authorList>
            <person name="Akman L."/>
            <person name="Yamashita A."/>
            <person name="Watanabe H."/>
            <person name="Oshima K."/>
            <person name="Shiba T."/>
            <person name="Hattori M."/>
            <person name="Aksoy S."/>
        </authorList>
    </citation>
    <scope>NUCLEOTIDE SEQUENCE [LARGE SCALE GENOMIC DNA]</scope>
</reference>
<name>LNT_WIGBR</name>
<comment type="function">
    <text evidence="1">Catalyzes the phospholipid dependent N-acylation of the N-terminal cysteine of apolipoprotein, the last step in lipoprotein maturation.</text>
</comment>
<comment type="catalytic activity">
    <reaction evidence="1">
        <text>N-terminal S-1,2-diacyl-sn-glyceryl-L-cysteinyl-[lipoprotein] + a glycerophospholipid = N-acyl-S-1,2-diacyl-sn-glyceryl-L-cysteinyl-[lipoprotein] + a 2-acyl-sn-glycero-3-phospholipid + H(+)</text>
        <dbReference type="Rhea" id="RHEA:48228"/>
        <dbReference type="Rhea" id="RHEA-COMP:14681"/>
        <dbReference type="Rhea" id="RHEA-COMP:14684"/>
        <dbReference type="ChEBI" id="CHEBI:15378"/>
        <dbReference type="ChEBI" id="CHEBI:136912"/>
        <dbReference type="ChEBI" id="CHEBI:140656"/>
        <dbReference type="ChEBI" id="CHEBI:140657"/>
        <dbReference type="ChEBI" id="CHEBI:140660"/>
        <dbReference type="EC" id="2.3.1.269"/>
    </reaction>
</comment>
<comment type="pathway">
    <text evidence="1">Protein modification; lipoprotein biosynthesis (N-acyl transfer).</text>
</comment>
<comment type="subcellular location">
    <subcellularLocation>
        <location evidence="1">Cell membrane</location>
        <topology evidence="1">Multi-pass membrane protein</topology>
    </subcellularLocation>
</comment>
<comment type="similarity">
    <text evidence="1">Belongs to the CN hydrolase family. Apolipoprotein N-acyltransferase subfamily.</text>
</comment>
<accession>Q8D2A8</accession>
<dbReference type="EC" id="2.3.1.269" evidence="1"/>
<dbReference type="EMBL" id="BA000021">
    <property type="protein sequence ID" value="BAC24592.1"/>
    <property type="molecule type" value="Genomic_DNA"/>
</dbReference>
<dbReference type="SMR" id="Q8D2A8"/>
<dbReference type="STRING" id="36870.gene:10368949"/>
<dbReference type="KEGG" id="wbr:lnt"/>
<dbReference type="eggNOG" id="COG0815">
    <property type="taxonomic scope" value="Bacteria"/>
</dbReference>
<dbReference type="HOGENOM" id="CLU_019563_3_0_6"/>
<dbReference type="OrthoDB" id="9804277at2"/>
<dbReference type="UniPathway" id="UPA00666"/>
<dbReference type="Proteomes" id="UP000000562">
    <property type="component" value="Chromosome"/>
</dbReference>
<dbReference type="GO" id="GO:0005886">
    <property type="term" value="C:plasma membrane"/>
    <property type="evidence" value="ECO:0007669"/>
    <property type="project" value="UniProtKB-SubCell"/>
</dbReference>
<dbReference type="GO" id="GO:0016410">
    <property type="term" value="F:N-acyltransferase activity"/>
    <property type="evidence" value="ECO:0007669"/>
    <property type="project" value="UniProtKB-UniRule"/>
</dbReference>
<dbReference type="GO" id="GO:0042158">
    <property type="term" value="P:lipoprotein biosynthetic process"/>
    <property type="evidence" value="ECO:0007669"/>
    <property type="project" value="UniProtKB-UniRule"/>
</dbReference>
<dbReference type="CDD" id="cd07571">
    <property type="entry name" value="ALP_N-acyl_transferase"/>
    <property type="match status" value="1"/>
</dbReference>
<dbReference type="Gene3D" id="3.60.110.10">
    <property type="entry name" value="Carbon-nitrogen hydrolase"/>
    <property type="match status" value="1"/>
</dbReference>
<dbReference type="HAMAP" id="MF_01148">
    <property type="entry name" value="Lnt"/>
    <property type="match status" value="1"/>
</dbReference>
<dbReference type="InterPro" id="IPR004563">
    <property type="entry name" value="Apolipo_AcylTrfase"/>
</dbReference>
<dbReference type="InterPro" id="IPR003010">
    <property type="entry name" value="C-N_Hydrolase"/>
</dbReference>
<dbReference type="InterPro" id="IPR036526">
    <property type="entry name" value="C-N_Hydrolase_sf"/>
</dbReference>
<dbReference type="InterPro" id="IPR045378">
    <property type="entry name" value="LNT_N"/>
</dbReference>
<dbReference type="NCBIfam" id="TIGR00546">
    <property type="entry name" value="lnt"/>
    <property type="match status" value="1"/>
</dbReference>
<dbReference type="PANTHER" id="PTHR38686">
    <property type="entry name" value="APOLIPOPROTEIN N-ACYLTRANSFERASE"/>
    <property type="match status" value="1"/>
</dbReference>
<dbReference type="PANTHER" id="PTHR38686:SF1">
    <property type="entry name" value="APOLIPOPROTEIN N-ACYLTRANSFERASE"/>
    <property type="match status" value="1"/>
</dbReference>
<dbReference type="Pfam" id="PF00795">
    <property type="entry name" value="CN_hydrolase"/>
    <property type="match status" value="1"/>
</dbReference>
<dbReference type="Pfam" id="PF20154">
    <property type="entry name" value="LNT_N"/>
    <property type="match status" value="1"/>
</dbReference>
<dbReference type="SUPFAM" id="SSF56317">
    <property type="entry name" value="Carbon-nitrogen hydrolase"/>
    <property type="match status" value="1"/>
</dbReference>
<dbReference type="PROSITE" id="PS50263">
    <property type="entry name" value="CN_HYDROLASE"/>
    <property type="match status" value="1"/>
</dbReference>
<organism>
    <name type="scientific">Wigglesworthia glossinidia brevipalpis</name>
    <dbReference type="NCBI Taxonomy" id="36870"/>
    <lineage>
        <taxon>Bacteria</taxon>
        <taxon>Pseudomonadati</taxon>
        <taxon>Pseudomonadota</taxon>
        <taxon>Gammaproteobacteria</taxon>
        <taxon>Enterobacterales</taxon>
        <taxon>Erwiniaceae</taxon>
        <taxon>Wigglesworthia</taxon>
    </lineage>
</organism>
<feature type="chain" id="PRO_0000178111" description="Apolipoprotein N-acyltransferase">
    <location>
        <begin position="1"/>
        <end position="499"/>
    </location>
</feature>
<feature type="transmembrane region" description="Helical" evidence="1">
    <location>
        <begin position="18"/>
        <end position="38"/>
    </location>
</feature>
<feature type="transmembrane region" description="Helical" evidence="1">
    <location>
        <begin position="50"/>
        <end position="70"/>
    </location>
</feature>
<feature type="transmembrane region" description="Helical" evidence="1">
    <location>
        <begin position="82"/>
        <end position="102"/>
    </location>
</feature>
<feature type="transmembrane region" description="Helical" evidence="1">
    <location>
        <begin position="105"/>
        <end position="125"/>
    </location>
</feature>
<feature type="transmembrane region" description="Helical" evidence="1">
    <location>
        <begin position="156"/>
        <end position="176"/>
    </location>
</feature>
<feature type="transmembrane region" description="Helical" evidence="1">
    <location>
        <begin position="182"/>
        <end position="202"/>
    </location>
</feature>
<feature type="transmembrane region" description="Helical" evidence="1">
    <location>
        <begin position="476"/>
        <end position="496"/>
    </location>
</feature>
<feature type="domain" description="CN hydrolase" evidence="1">
    <location>
        <begin position="217"/>
        <end position="461"/>
    </location>
</feature>
<feature type="active site" description="Proton acceptor" evidence="1">
    <location>
        <position position="257"/>
    </location>
</feature>
<feature type="active site" evidence="1">
    <location>
        <position position="320"/>
    </location>
</feature>
<feature type="active site" description="Nucleophile" evidence="1">
    <location>
        <position position="372"/>
    </location>
</feature>
<keyword id="KW-0012">Acyltransferase</keyword>
<keyword id="KW-1003">Cell membrane</keyword>
<keyword id="KW-0472">Membrane</keyword>
<keyword id="KW-1185">Reference proteome</keyword>
<keyword id="KW-0808">Transferase</keyword>
<keyword id="KW-0812">Transmembrane</keyword>
<keyword id="KW-1133">Transmembrane helix</keyword>
<sequence length="499" mass="57258">MIKIFTALFFGSLNVISFSPYNFWPASIISIFGLLIITTNCKNLINSAKLGFLWGIGNFFNEIYWIYISINKFFGINLFFSIIIILLLSSYLSLYPTIFVILTKFFFPKINFFLFCVGAPSAWMISEILRSKILTGFPWLEIGYSQINGPLKGLAPIIGVSGISYILIIISGMCVLSFYKKSYYPIIFIIFIITLTYPLNFFKWYSVKEKSTKIALIQGNISQHTYIDNNQIQKNLEQYLKITKKIINSSNIIIWPESAIPCDEISCRNFLLKIDKELKLKKSYLITGIISLKKSNYYNSIITLGGNSPYLDNSKNKYYKYNLVPFGEKLPLKSILNPIFNKLGLSLIDLKKGDFFQNQLKIFDFNIVPSICYEIIFGDRIRKNVKINTDFLLTISNDSWFGDSIGPWQHFNMARMRALETGKNLLRASNNGITAIIGPNGELKSKLPQFVNDFLLEEVFSTMGVTPYVKFGNIPLLFFSIICFIISFFIKIKLIFLKN</sequence>
<proteinExistence type="inferred from homology"/>